<reference key="1">
    <citation type="journal article" date="1999" name="Nature">
        <title>Sequence and analysis of chromosome 2 of the plant Arabidopsis thaliana.</title>
        <authorList>
            <person name="Lin X."/>
            <person name="Kaul S."/>
            <person name="Rounsley S.D."/>
            <person name="Shea T.P."/>
            <person name="Benito M.-I."/>
            <person name="Town C.D."/>
            <person name="Fujii C.Y."/>
            <person name="Mason T.M."/>
            <person name="Bowman C.L."/>
            <person name="Barnstead M.E."/>
            <person name="Feldblyum T.V."/>
            <person name="Buell C.R."/>
            <person name="Ketchum K.A."/>
            <person name="Lee J.J."/>
            <person name="Ronning C.M."/>
            <person name="Koo H.L."/>
            <person name="Moffat K.S."/>
            <person name="Cronin L.A."/>
            <person name="Shen M."/>
            <person name="Pai G."/>
            <person name="Van Aken S."/>
            <person name="Umayam L."/>
            <person name="Tallon L.J."/>
            <person name="Gill J.E."/>
            <person name="Adams M.D."/>
            <person name="Carrera A.J."/>
            <person name="Creasy T.H."/>
            <person name="Goodman H.M."/>
            <person name="Somerville C.R."/>
            <person name="Copenhaver G.P."/>
            <person name="Preuss D."/>
            <person name="Nierman W.C."/>
            <person name="White O."/>
            <person name="Eisen J.A."/>
            <person name="Salzberg S.L."/>
            <person name="Fraser C.M."/>
            <person name="Venter J.C."/>
        </authorList>
    </citation>
    <scope>NUCLEOTIDE SEQUENCE [LARGE SCALE GENOMIC DNA]</scope>
    <source>
        <strain>cv. Columbia</strain>
    </source>
</reference>
<reference key="2">
    <citation type="journal article" date="2017" name="Plant J.">
        <title>Araport11: a complete reannotation of the Arabidopsis thaliana reference genome.</title>
        <authorList>
            <person name="Cheng C.Y."/>
            <person name="Krishnakumar V."/>
            <person name="Chan A.P."/>
            <person name="Thibaud-Nissen F."/>
            <person name="Schobel S."/>
            <person name="Town C.D."/>
        </authorList>
    </citation>
    <scope>GENOME REANNOTATION</scope>
    <source>
        <strain>cv. Columbia</strain>
    </source>
</reference>
<reference key="3">
    <citation type="journal article" date="2001" name="Plant Physiol.">
        <title>The organization of cytoplasmic ribosomal protein genes in the Arabidopsis genome.</title>
        <authorList>
            <person name="Barakat A."/>
            <person name="Szick-Miranda K."/>
            <person name="Chang I.-F."/>
            <person name="Guyot R."/>
            <person name="Blanc G."/>
            <person name="Cooke R."/>
            <person name="Delseny M."/>
            <person name="Bailey-Serres J."/>
        </authorList>
    </citation>
    <scope>GENE FAMILY ORGANIZATION</scope>
    <scope>NOMENCLATURE</scope>
</reference>
<reference key="4">
    <citation type="journal article" date="2023" name="Plant Cell">
        <title>An updated nomenclature for plant ribosomal protein genes.</title>
        <authorList>
            <person name="Scarpin M.R."/>
            <person name="Busche M."/>
            <person name="Martinez R.E."/>
            <person name="Harper L.C."/>
            <person name="Reiser L."/>
            <person name="Szakonyi D."/>
            <person name="Merchante C."/>
            <person name="Lan T."/>
            <person name="Xiong W."/>
            <person name="Mo B."/>
            <person name="Tang G."/>
            <person name="Chen X."/>
            <person name="Bailey-Serres J."/>
            <person name="Browning K.S."/>
            <person name="Brunkard J.O."/>
        </authorList>
    </citation>
    <scope>NOMENCLATURE</scope>
</reference>
<organism>
    <name type="scientific">Arabidopsis thaliana</name>
    <name type="common">Mouse-ear cress</name>
    <dbReference type="NCBI Taxonomy" id="3702"/>
    <lineage>
        <taxon>Eukaryota</taxon>
        <taxon>Viridiplantae</taxon>
        <taxon>Streptophyta</taxon>
        <taxon>Embryophyta</taxon>
        <taxon>Tracheophyta</taxon>
        <taxon>Spermatophyta</taxon>
        <taxon>Magnoliopsida</taxon>
        <taxon>eudicotyledons</taxon>
        <taxon>Gunneridae</taxon>
        <taxon>Pentapetalae</taxon>
        <taxon>rosids</taxon>
        <taxon>malvids</taxon>
        <taxon>Brassicales</taxon>
        <taxon>Brassicaceae</taxon>
        <taxon>Camelineae</taxon>
        <taxon>Arabidopsis</taxon>
    </lineage>
</organism>
<dbReference type="EMBL" id="AC002535">
    <property type="protein sequence ID" value="AAC62853.2"/>
    <property type="status" value="ALT_SEQ"/>
    <property type="molecule type" value="Genomic_DNA"/>
</dbReference>
<dbReference type="EMBL" id="CP002685">
    <property type="protein sequence ID" value="AEC10859.2"/>
    <property type="status" value="ALT_SEQ"/>
    <property type="molecule type" value="Genomic_DNA"/>
</dbReference>
<dbReference type="PIR" id="H84916">
    <property type="entry name" value="H84916"/>
</dbReference>
<dbReference type="PIR" id="T00427">
    <property type="entry name" value="T00427"/>
</dbReference>
<dbReference type="RefSeq" id="NP_001318441.1">
    <property type="nucleotide sequence ID" value="NM_001337267.1"/>
</dbReference>
<dbReference type="SMR" id="O22254"/>
<dbReference type="BioGRID" id="4705">
    <property type="interactions" value="162"/>
</dbReference>
<dbReference type="FunCoup" id="O22254">
    <property type="interactions" value="2943"/>
</dbReference>
<dbReference type="STRING" id="3702.O22254"/>
<dbReference type="PaxDb" id="3702-AT2G47570.2"/>
<dbReference type="PeptideAtlas" id="O22254"/>
<dbReference type="ProteomicsDB" id="236204"/>
<dbReference type="DNASU" id="819370"/>
<dbReference type="GeneID" id="819370"/>
<dbReference type="KEGG" id="ath:AT2G47570"/>
<dbReference type="Araport" id="AT2G47570"/>
<dbReference type="TAIR" id="AT2G47570"/>
<dbReference type="eggNOG" id="KOG1714">
    <property type="taxonomic scope" value="Eukaryota"/>
</dbReference>
<dbReference type="InParanoid" id="O22254"/>
<dbReference type="PhylomeDB" id="O22254"/>
<dbReference type="PRO" id="PR:O22254"/>
<dbReference type="Proteomes" id="UP000006548">
    <property type="component" value="Chromosome 2"/>
</dbReference>
<dbReference type="ExpressionAtlas" id="O22254">
    <property type="expression patterns" value="baseline and differential"/>
</dbReference>
<dbReference type="GO" id="GO:0022625">
    <property type="term" value="C:cytosolic large ribosomal subunit"/>
    <property type="evidence" value="ECO:0000318"/>
    <property type="project" value="GO_Central"/>
</dbReference>
<dbReference type="GO" id="GO:0003729">
    <property type="term" value="F:mRNA binding"/>
    <property type="evidence" value="ECO:0007669"/>
    <property type="project" value="UniProtKB-ARBA"/>
</dbReference>
<dbReference type="GO" id="GO:0003723">
    <property type="term" value="F:RNA binding"/>
    <property type="evidence" value="ECO:0000318"/>
    <property type="project" value="GO_Central"/>
</dbReference>
<dbReference type="GO" id="GO:0003735">
    <property type="term" value="F:structural constituent of ribosome"/>
    <property type="evidence" value="ECO:0000318"/>
    <property type="project" value="GO_Central"/>
</dbReference>
<dbReference type="GO" id="GO:0006412">
    <property type="term" value="P:translation"/>
    <property type="evidence" value="ECO:0007669"/>
    <property type="project" value="InterPro"/>
</dbReference>
<dbReference type="FunFam" id="3.100.10.10:FF:000001">
    <property type="entry name" value="60S ribosomal protein L18"/>
    <property type="match status" value="1"/>
</dbReference>
<dbReference type="Gene3D" id="3.100.10.10">
    <property type="match status" value="1"/>
</dbReference>
<dbReference type="InterPro" id="IPR000039">
    <property type="entry name" value="Ribosomal_eL18"/>
</dbReference>
<dbReference type="InterPro" id="IPR021131">
    <property type="entry name" value="Ribosomal_uL15/eL18"/>
</dbReference>
<dbReference type="InterPro" id="IPR036227">
    <property type="entry name" value="Ribosomal_uL15/eL18_sf"/>
</dbReference>
<dbReference type="PANTHER" id="PTHR10934">
    <property type="entry name" value="60S RIBOSOMAL PROTEIN L18"/>
    <property type="match status" value="1"/>
</dbReference>
<dbReference type="PANTHER" id="PTHR10934:SF25">
    <property type="entry name" value="LARGE RIBOSOMAL SUBUNIT PROTEIN EL18X-RELATED"/>
    <property type="match status" value="1"/>
</dbReference>
<dbReference type="Pfam" id="PF17135">
    <property type="entry name" value="Ribosomal_L18"/>
    <property type="match status" value="1"/>
</dbReference>
<dbReference type="SUPFAM" id="SSF52080">
    <property type="entry name" value="Ribosomal proteins L15p and L18e"/>
    <property type="match status" value="1"/>
</dbReference>
<protein>
    <recommendedName>
        <fullName evidence="1">Large ribosomal subunit protein eL18z</fullName>
    </recommendedName>
    <alternativeName>
        <fullName>Putative 60S ribosomal protein L18-1</fullName>
    </alternativeName>
</protein>
<keyword id="KW-1185">Reference proteome</keyword>
<keyword id="KW-0687">Ribonucleoprotein</keyword>
<keyword id="KW-0689">Ribosomal protein</keyword>
<comment type="similarity">
    <text evidence="2">Belongs to the eukaryotic ribosomal protein eL18 family.</text>
</comment>
<comment type="sequence caution">
    <conflict type="erroneous gene model prediction">
        <sequence resource="EMBL-CDS" id="AAC62853"/>
    </conflict>
</comment>
<comment type="sequence caution" evidence="2">
    <conflict type="erroneous gene model prediction">
        <sequence resource="EMBL-CDS" id="AEC10859"/>
    </conflict>
</comment>
<evidence type="ECO:0000303" key="1">
    <source>
    </source>
</evidence>
<evidence type="ECO:0000305" key="2"/>
<gene>
    <name type="primary">RPL18A</name>
    <name type="ordered locus">At2g47570</name>
    <name type="ORF">T30B22.13</name>
</gene>
<proteinExistence type="inferred from homology"/>
<feature type="chain" id="PRO_0000240519" description="Large ribosomal subunit protein eL18z">
    <location>
        <begin position="1"/>
        <end position="188"/>
    </location>
</feature>
<sequence>MGIDLIAGGKSKKTKRTEPKSDDVYLKLLVKANRYLVRRTESKFNAVILKRLFMSKVNKAPLSLSRLVRYMDGKDGKIAVIVGTVTDDVRIEDVPALTVTALRFTESARARIHKAGGECLTFDQLALPCPTWSENTVLLRGPKNTREAVKHFGPAPGVPHSHTKPYVRQTGKKIEIARGRRRSRGFKV</sequence>
<accession>O22254</accession>
<accession>F4IM13</accession>
<name>RL181_ARATH</name>